<organism>
    <name type="scientific">Rattus norvegicus</name>
    <name type="common">Rat</name>
    <dbReference type="NCBI Taxonomy" id="10116"/>
    <lineage>
        <taxon>Eukaryota</taxon>
        <taxon>Metazoa</taxon>
        <taxon>Chordata</taxon>
        <taxon>Craniata</taxon>
        <taxon>Vertebrata</taxon>
        <taxon>Euteleostomi</taxon>
        <taxon>Mammalia</taxon>
        <taxon>Eutheria</taxon>
        <taxon>Euarchontoglires</taxon>
        <taxon>Glires</taxon>
        <taxon>Rodentia</taxon>
        <taxon>Myomorpha</taxon>
        <taxon>Muroidea</taxon>
        <taxon>Muridae</taxon>
        <taxon>Murinae</taxon>
        <taxon>Rattus</taxon>
    </lineage>
</organism>
<keyword id="KW-0903">Direct protein sequencing</keyword>
<keyword id="KW-1015">Disulfide bond</keyword>
<keyword id="KW-0646">Protease inhibitor</keyword>
<keyword id="KW-1185">Reference proteome</keyword>
<keyword id="KW-0964">Secreted</keyword>
<keyword id="KW-0722">Serine protease inhibitor</keyword>
<keyword id="KW-0732">Signal</keyword>
<evidence type="ECO:0000255" key="1">
    <source>
        <dbReference type="PROSITE-ProRule" id="PRU00722"/>
    </source>
</evidence>
<evidence type="ECO:0000256" key="2">
    <source>
        <dbReference type="SAM" id="MobiDB-lite"/>
    </source>
</evidence>
<evidence type="ECO:0000269" key="3">
    <source>
    </source>
</evidence>
<reference key="1">
    <citation type="journal article" date="1998" name="J. Biol. Chem.">
        <title>Molecular cloning and expression of ps20 growth inhibitor. A novel WAP-type 'four-disulfide core' domain protein expressed in smooth muscle.</title>
        <authorList>
            <person name="Larsen M."/>
            <person name="Ressler S.J."/>
            <person name="Lu B."/>
            <person name="Gerdes M.J."/>
            <person name="McBride L."/>
            <person name="Dang T.D."/>
            <person name="Rowley D.R."/>
        </authorList>
    </citation>
    <scope>NUCLEOTIDE SEQUENCE [MRNA]</scope>
    <source>
        <strain>Sprague-Dawley</strain>
        <tissue>Prostate</tissue>
    </source>
</reference>
<reference key="2">
    <citation type="journal article" date="2004" name="Genome Res.">
        <title>The status, quality, and expansion of the NIH full-length cDNA project: the Mammalian Gene Collection (MGC).</title>
        <authorList>
            <consortium name="The MGC Project Team"/>
        </authorList>
    </citation>
    <scope>NUCLEOTIDE SEQUENCE [LARGE SCALE MRNA]</scope>
    <source>
        <tissue>Pituitary</tissue>
    </source>
</reference>
<reference key="3">
    <citation type="journal article" date="1995" name="J. Biol. Chem.">
        <title>Purification of a novel protein (ps20) from urogenital sinus mesenchymal cells with growth inhibitory properties in vitro.</title>
        <authorList>
            <person name="Rowley D.R."/>
            <person name="Dang T.D."/>
            <person name="Larsen M."/>
            <person name="Gerdes M.J."/>
            <person name="McBride L."/>
            <person name="Lu B."/>
        </authorList>
    </citation>
    <scope>PROTEIN SEQUENCE OF 27-54</scope>
    <scope>CHARACTERIZATION</scope>
</reference>
<protein>
    <recommendedName>
        <fullName>WAP four-disulfide core domain protein 1</fullName>
    </recommendedName>
    <alternativeName>
        <fullName>Prostate stromal protein ps20</fullName>
    </alternativeName>
    <alternativeName>
        <fullName>ps20 growth inhibitor</fullName>
    </alternativeName>
</protein>
<name>WFDC1_RAT</name>
<sequence>MGSCDRKALWALSFLLLLLGSSSVQGTWEAMLPVRLAEKSQAEEVAATGSRQPHADRCPPPPRTLPPGACQATRCQSDSECPRHRRCCYNGCAYACLEAVPPPPVLDWLVQPKPRWLGGNGWLLDGPEEVLQAEACSTTEDGAEPLLCPSGYECHILQPGDAAQGIPNHGRCVKQRRQAEGRVLRQKLHKEYPEGDSKYVAEPGKGQQRHFP</sequence>
<proteinExistence type="evidence at protein level"/>
<comment type="function">
    <text>Has growth inhibitory activity.</text>
</comment>
<comment type="subcellular location">
    <subcellularLocation>
        <location>Secreted</location>
    </subcellularLocation>
</comment>
<comment type="tissue specificity">
    <text>Vascular smooth muscle and prostate. Periacinar ring.</text>
</comment>
<gene>
    <name type="primary">Wfdc1</name>
    <name type="synonym">Ps20</name>
</gene>
<accession>O70280</accession>
<dbReference type="EMBL" id="AF037272">
    <property type="protein sequence ID" value="AAC40055.1"/>
    <property type="molecule type" value="mRNA"/>
</dbReference>
<dbReference type="EMBL" id="BC063152">
    <property type="protein sequence ID" value="AAH63152.1"/>
    <property type="molecule type" value="mRNA"/>
</dbReference>
<dbReference type="RefSeq" id="NP_598265.1">
    <property type="nucleotide sequence ID" value="NM_133581.2"/>
</dbReference>
<dbReference type="RefSeq" id="XP_006255767.1">
    <property type="nucleotide sequence ID" value="XM_006255705.4"/>
</dbReference>
<dbReference type="SMR" id="O70280"/>
<dbReference type="FunCoup" id="O70280">
    <property type="interactions" value="21"/>
</dbReference>
<dbReference type="STRING" id="10116.ENSRNOP00000021630"/>
<dbReference type="MEROPS" id="I17.004"/>
<dbReference type="PhosphoSitePlus" id="O70280"/>
<dbReference type="PaxDb" id="10116-ENSRNOP00000021630"/>
<dbReference type="GeneID" id="171112"/>
<dbReference type="KEGG" id="rno:171112"/>
<dbReference type="UCSC" id="RGD:68938">
    <property type="organism name" value="rat"/>
</dbReference>
<dbReference type="AGR" id="RGD:68938"/>
<dbReference type="CTD" id="58189"/>
<dbReference type="RGD" id="68938">
    <property type="gene designation" value="Wfdc1"/>
</dbReference>
<dbReference type="VEuPathDB" id="HostDB:ENSRNOG00000015904"/>
<dbReference type="eggNOG" id="ENOG502QWDC">
    <property type="taxonomic scope" value="Eukaryota"/>
</dbReference>
<dbReference type="HOGENOM" id="CLU_108761_0_0_1"/>
<dbReference type="InParanoid" id="O70280"/>
<dbReference type="OrthoDB" id="5989673at2759"/>
<dbReference type="PhylomeDB" id="O70280"/>
<dbReference type="TreeFam" id="TF328768"/>
<dbReference type="PRO" id="PR:O70280"/>
<dbReference type="Proteomes" id="UP000002494">
    <property type="component" value="Chromosome 19"/>
</dbReference>
<dbReference type="Bgee" id="ENSRNOG00000015904">
    <property type="expression patterns" value="Expressed in heart and 19 other cell types or tissues"/>
</dbReference>
<dbReference type="GO" id="GO:0005615">
    <property type="term" value="C:extracellular space"/>
    <property type="evidence" value="ECO:0000314"/>
    <property type="project" value="RGD"/>
</dbReference>
<dbReference type="GO" id="GO:0004867">
    <property type="term" value="F:serine-type endopeptidase inhibitor activity"/>
    <property type="evidence" value="ECO:0007669"/>
    <property type="project" value="UniProtKB-KW"/>
</dbReference>
<dbReference type="GO" id="GO:0050680">
    <property type="term" value="P:negative regulation of epithelial cell proliferation"/>
    <property type="evidence" value="ECO:0000315"/>
    <property type="project" value="RGD"/>
</dbReference>
<dbReference type="GO" id="GO:0050728">
    <property type="term" value="P:negative regulation of inflammatory response"/>
    <property type="evidence" value="ECO:0000266"/>
    <property type="project" value="RGD"/>
</dbReference>
<dbReference type="GO" id="GO:0061045">
    <property type="term" value="P:negative regulation of wound healing"/>
    <property type="evidence" value="ECO:0000266"/>
    <property type="project" value="RGD"/>
</dbReference>
<dbReference type="GO" id="GO:0001558">
    <property type="term" value="P:regulation of cell growth"/>
    <property type="evidence" value="ECO:0000314"/>
    <property type="project" value="RGD"/>
</dbReference>
<dbReference type="GO" id="GO:0032355">
    <property type="term" value="P:response to estradiol"/>
    <property type="evidence" value="ECO:0000270"/>
    <property type="project" value="RGD"/>
</dbReference>
<dbReference type="GO" id="GO:0009410">
    <property type="term" value="P:response to xenobiotic stimulus"/>
    <property type="evidence" value="ECO:0000270"/>
    <property type="project" value="RGD"/>
</dbReference>
<dbReference type="FunFam" id="4.10.75.10:FF:000003">
    <property type="entry name" value="WAP four-disulfide core domain protein 1"/>
    <property type="match status" value="1"/>
</dbReference>
<dbReference type="Gene3D" id="4.10.75.10">
    <property type="entry name" value="Elafin-like"/>
    <property type="match status" value="1"/>
</dbReference>
<dbReference type="InterPro" id="IPR036645">
    <property type="entry name" value="Elafin-like_sf"/>
</dbReference>
<dbReference type="InterPro" id="IPR008197">
    <property type="entry name" value="WAP_dom"/>
</dbReference>
<dbReference type="InterPro" id="IPR042357">
    <property type="entry name" value="WFDC1"/>
</dbReference>
<dbReference type="PANTHER" id="PTHR14308">
    <property type="entry name" value="WAP FOUR-DISULFIDE CORE DOMAIN PROTEIN 1"/>
    <property type="match status" value="1"/>
</dbReference>
<dbReference type="PANTHER" id="PTHR14308:SF0">
    <property type="entry name" value="WAP FOUR-DISULFIDE CORE DOMAIN PROTEIN 1"/>
    <property type="match status" value="1"/>
</dbReference>
<dbReference type="Pfam" id="PF00095">
    <property type="entry name" value="WAP"/>
    <property type="match status" value="1"/>
</dbReference>
<dbReference type="SMART" id="SM00217">
    <property type="entry name" value="WAP"/>
    <property type="match status" value="1"/>
</dbReference>
<dbReference type="SUPFAM" id="SSF57256">
    <property type="entry name" value="Elafin-like"/>
    <property type="match status" value="1"/>
</dbReference>
<dbReference type="PROSITE" id="PS51390">
    <property type="entry name" value="WAP"/>
    <property type="match status" value="1"/>
</dbReference>
<feature type="signal peptide" evidence="3">
    <location>
        <begin position="1"/>
        <end position="26"/>
    </location>
</feature>
<feature type="chain" id="PRO_0000041367" description="WAP four-disulfide core domain protein 1">
    <location>
        <begin position="27"/>
        <end position="212"/>
    </location>
</feature>
<feature type="domain" description="WAP" evidence="1">
    <location>
        <begin position="51"/>
        <end position="100"/>
    </location>
</feature>
<feature type="region of interest" description="Disordered" evidence="2">
    <location>
        <begin position="43"/>
        <end position="62"/>
    </location>
</feature>
<feature type="region of interest" description="Disordered" evidence="2">
    <location>
        <begin position="191"/>
        <end position="212"/>
    </location>
</feature>
<feature type="disulfide bond" evidence="1">
    <location>
        <begin position="58"/>
        <end position="88"/>
    </location>
</feature>
<feature type="disulfide bond" evidence="1">
    <location>
        <begin position="70"/>
        <end position="92"/>
    </location>
</feature>
<feature type="disulfide bond" evidence="1">
    <location>
        <begin position="75"/>
        <end position="87"/>
    </location>
</feature>
<feature type="disulfide bond" evidence="1">
    <location>
        <begin position="81"/>
        <end position="96"/>
    </location>
</feature>